<name>PDXS_METM6</name>
<proteinExistence type="inferred from homology"/>
<evidence type="ECO:0000255" key="1">
    <source>
        <dbReference type="HAMAP-Rule" id="MF_01824"/>
    </source>
</evidence>
<protein>
    <recommendedName>
        <fullName evidence="1">Pyridoxal 5'-phosphate synthase subunit PdxS</fullName>
        <shortName evidence="1">PLP synthase subunit PdxS</shortName>
        <ecNumber evidence="1">4.3.3.6</ecNumber>
    </recommendedName>
    <alternativeName>
        <fullName evidence="1">Pdx1</fullName>
    </alternativeName>
</protein>
<keyword id="KW-0456">Lyase</keyword>
<keyword id="KW-0663">Pyridoxal phosphate</keyword>
<keyword id="KW-0704">Schiff base</keyword>
<accession>A9A8I8</accession>
<dbReference type="EC" id="4.3.3.6" evidence="1"/>
<dbReference type="EMBL" id="CP000867">
    <property type="protein sequence ID" value="ABX01661.1"/>
    <property type="molecule type" value="Genomic_DNA"/>
</dbReference>
<dbReference type="SMR" id="A9A8I8"/>
<dbReference type="STRING" id="444158.MmarC6_0844"/>
<dbReference type="KEGG" id="mmx:MmarC6_0844"/>
<dbReference type="eggNOG" id="arCOG04075">
    <property type="taxonomic scope" value="Archaea"/>
</dbReference>
<dbReference type="HOGENOM" id="CLU_055352_1_0_2"/>
<dbReference type="OrthoDB" id="6840at2157"/>
<dbReference type="PhylomeDB" id="A9A8I8"/>
<dbReference type="UniPathway" id="UPA00245"/>
<dbReference type="GO" id="GO:0036381">
    <property type="term" value="F:pyridoxal 5'-phosphate synthase (glutamine hydrolysing) activity"/>
    <property type="evidence" value="ECO:0007669"/>
    <property type="project" value="UniProtKB-UniRule"/>
</dbReference>
<dbReference type="GO" id="GO:0006520">
    <property type="term" value="P:amino acid metabolic process"/>
    <property type="evidence" value="ECO:0007669"/>
    <property type="project" value="TreeGrafter"/>
</dbReference>
<dbReference type="GO" id="GO:0042823">
    <property type="term" value="P:pyridoxal phosphate biosynthetic process"/>
    <property type="evidence" value="ECO:0007669"/>
    <property type="project" value="UniProtKB-UniRule"/>
</dbReference>
<dbReference type="GO" id="GO:0008615">
    <property type="term" value="P:pyridoxine biosynthetic process"/>
    <property type="evidence" value="ECO:0007669"/>
    <property type="project" value="TreeGrafter"/>
</dbReference>
<dbReference type="CDD" id="cd04727">
    <property type="entry name" value="pdxS"/>
    <property type="match status" value="1"/>
</dbReference>
<dbReference type="FunFam" id="3.20.20.70:FF:000001">
    <property type="entry name" value="Pyridoxine biosynthesis protein PDX1"/>
    <property type="match status" value="1"/>
</dbReference>
<dbReference type="Gene3D" id="3.20.20.70">
    <property type="entry name" value="Aldolase class I"/>
    <property type="match status" value="1"/>
</dbReference>
<dbReference type="HAMAP" id="MF_01824">
    <property type="entry name" value="PdxS"/>
    <property type="match status" value="1"/>
</dbReference>
<dbReference type="InterPro" id="IPR013785">
    <property type="entry name" value="Aldolase_TIM"/>
</dbReference>
<dbReference type="InterPro" id="IPR001852">
    <property type="entry name" value="PdxS/SNZ"/>
</dbReference>
<dbReference type="InterPro" id="IPR033755">
    <property type="entry name" value="PdxS/SNZ_N"/>
</dbReference>
<dbReference type="InterPro" id="IPR011060">
    <property type="entry name" value="RibuloseP-bd_barrel"/>
</dbReference>
<dbReference type="NCBIfam" id="NF003215">
    <property type="entry name" value="PRK04180.1"/>
    <property type="match status" value="1"/>
</dbReference>
<dbReference type="NCBIfam" id="TIGR00343">
    <property type="entry name" value="pyridoxal 5'-phosphate synthase lyase subunit PdxS"/>
    <property type="match status" value="1"/>
</dbReference>
<dbReference type="PANTHER" id="PTHR31829">
    <property type="entry name" value="PYRIDOXAL 5'-PHOSPHATE SYNTHASE SUBUNIT SNZ1-RELATED"/>
    <property type="match status" value="1"/>
</dbReference>
<dbReference type="PANTHER" id="PTHR31829:SF0">
    <property type="entry name" value="PYRIDOXAL 5'-PHOSPHATE SYNTHASE SUBUNIT SNZ1-RELATED"/>
    <property type="match status" value="1"/>
</dbReference>
<dbReference type="Pfam" id="PF01680">
    <property type="entry name" value="SOR_SNZ"/>
    <property type="match status" value="1"/>
</dbReference>
<dbReference type="PIRSF" id="PIRSF029271">
    <property type="entry name" value="Pdx1"/>
    <property type="match status" value="1"/>
</dbReference>
<dbReference type="SUPFAM" id="SSF51366">
    <property type="entry name" value="Ribulose-phoshate binding barrel"/>
    <property type="match status" value="1"/>
</dbReference>
<dbReference type="PROSITE" id="PS01235">
    <property type="entry name" value="PDXS_SNZ_1"/>
    <property type="match status" value="1"/>
</dbReference>
<dbReference type="PROSITE" id="PS51129">
    <property type="entry name" value="PDXS_SNZ_2"/>
    <property type="match status" value="1"/>
</dbReference>
<feature type="chain" id="PRO_1000188234" description="Pyridoxal 5'-phosphate synthase subunit PdxS">
    <location>
        <begin position="1"/>
        <end position="299"/>
    </location>
</feature>
<feature type="active site" description="Schiff-base intermediate with D-ribose 5-phosphate" evidence="1">
    <location>
        <position position="81"/>
    </location>
</feature>
<feature type="binding site" evidence="1">
    <location>
        <position position="24"/>
    </location>
    <ligand>
        <name>D-ribose 5-phosphate</name>
        <dbReference type="ChEBI" id="CHEBI:78346"/>
    </ligand>
</feature>
<feature type="binding site" evidence="1">
    <location>
        <position position="153"/>
    </location>
    <ligand>
        <name>D-ribose 5-phosphate</name>
        <dbReference type="ChEBI" id="CHEBI:78346"/>
    </ligand>
</feature>
<feature type="binding site" evidence="1">
    <location>
        <position position="165"/>
    </location>
    <ligand>
        <name>D-glyceraldehyde 3-phosphate</name>
        <dbReference type="ChEBI" id="CHEBI:59776"/>
    </ligand>
</feature>
<feature type="binding site" evidence="1">
    <location>
        <position position="219"/>
    </location>
    <ligand>
        <name>D-ribose 5-phosphate</name>
        <dbReference type="ChEBI" id="CHEBI:78346"/>
    </ligand>
</feature>
<feature type="binding site" evidence="1">
    <location>
        <begin position="240"/>
        <end position="241"/>
    </location>
    <ligand>
        <name>D-ribose 5-phosphate</name>
        <dbReference type="ChEBI" id="CHEBI:78346"/>
    </ligand>
</feature>
<sequence>MKKLGTDLLKRGFAKMVKHGVVMDVTNVEQAQIAEDAGAAAVMALERVPADIRVQGGVARMSDPEMILEIKDAVSIPVMAKARIGHFVEAQLLESIGVDMVDESEVLTPADEVNHIDKRAFTAPFVCGARNLGEALRRIDEGAAMIRTKGEAGTGNVVEAVKHMRAVNEGIARVVGYKEMGLEAELIQMARNELKVPMELISEVAELKRLPVVNFAAGGIATPADAALMMQMGCDGVFVGSGIFKSGNPATRAKAIVEATYNFDKPAVIGEVSKNLGEAMVGINIDEIPEEKLLAKRGI</sequence>
<comment type="function">
    <text evidence="1">Catalyzes the formation of pyridoxal 5'-phosphate from ribose 5-phosphate (RBP), glyceraldehyde 3-phosphate (G3P) and ammonia. The ammonia is provided by the PdxT subunit. Can also use ribulose 5-phosphate and dihydroxyacetone phosphate as substrates, resulting from enzyme-catalyzed isomerization of RBP and G3P, respectively.</text>
</comment>
<comment type="catalytic activity">
    <reaction evidence="1">
        <text>aldehydo-D-ribose 5-phosphate + D-glyceraldehyde 3-phosphate + L-glutamine = pyridoxal 5'-phosphate + L-glutamate + phosphate + 3 H2O + H(+)</text>
        <dbReference type="Rhea" id="RHEA:31507"/>
        <dbReference type="ChEBI" id="CHEBI:15377"/>
        <dbReference type="ChEBI" id="CHEBI:15378"/>
        <dbReference type="ChEBI" id="CHEBI:29985"/>
        <dbReference type="ChEBI" id="CHEBI:43474"/>
        <dbReference type="ChEBI" id="CHEBI:58273"/>
        <dbReference type="ChEBI" id="CHEBI:58359"/>
        <dbReference type="ChEBI" id="CHEBI:59776"/>
        <dbReference type="ChEBI" id="CHEBI:597326"/>
        <dbReference type="EC" id="4.3.3.6"/>
    </reaction>
</comment>
<comment type="pathway">
    <text evidence="1">Cofactor biosynthesis; pyridoxal 5'-phosphate biosynthesis.</text>
</comment>
<comment type="subunit">
    <text evidence="1">In the presence of PdxT, forms a dodecamer of heterodimers.</text>
</comment>
<comment type="similarity">
    <text evidence="1">Belongs to the PdxS/SNZ family.</text>
</comment>
<organism>
    <name type="scientific">Methanococcus maripaludis (strain C6 / ATCC BAA-1332)</name>
    <dbReference type="NCBI Taxonomy" id="444158"/>
    <lineage>
        <taxon>Archaea</taxon>
        <taxon>Methanobacteriati</taxon>
        <taxon>Methanobacteriota</taxon>
        <taxon>Methanomada group</taxon>
        <taxon>Methanococci</taxon>
        <taxon>Methanococcales</taxon>
        <taxon>Methanococcaceae</taxon>
        <taxon>Methanococcus</taxon>
    </lineage>
</organism>
<reference key="1">
    <citation type="submission" date="2007-10" db="EMBL/GenBank/DDBJ databases">
        <title>Complete sequence of Methanococcus maripaludis C6.</title>
        <authorList>
            <consortium name="US DOE Joint Genome Institute"/>
            <person name="Copeland A."/>
            <person name="Lucas S."/>
            <person name="Lapidus A."/>
            <person name="Barry K."/>
            <person name="Glavina del Rio T."/>
            <person name="Dalin E."/>
            <person name="Tice H."/>
            <person name="Pitluck S."/>
            <person name="Clum A."/>
            <person name="Schmutz J."/>
            <person name="Larimer F."/>
            <person name="Land M."/>
            <person name="Hauser L."/>
            <person name="Kyrpides N."/>
            <person name="Mikhailova N."/>
            <person name="Sieprawska-Lupa M."/>
            <person name="Whitman W.B."/>
            <person name="Richardson P."/>
        </authorList>
    </citation>
    <scope>NUCLEOTIDE SEQUENCE [LARGE SCALE GENOMIC DNA]</scope>
    <source>
        <strain>C6 / ATCC BAA-1332</strain>
    </source>
</reference>
<gene>
    <name evidence="1" type="primary">pdxS</name>
    <name type="ordered locus">MmarC6_0844</name>
</gene>